<organism>
    <name type="scientific">Allorhizobium ampelinum (strain ATCC BAA-846 / DSM 112012 / S4)</name>
    <name type="common">Agrobacterium vitis (strain S4)</name>
    <dbReference type="NCBI Taxonomy" id="311402"/>
    <lineage>
        <taxon>Bacteria</taxon>
        <taxon>Pseudomonadati</taxon>
        <taxon>Pseudomonadota</taxon>
        <taxon>Alphaproteobacteria</taxon>
        <taxon>Hyphomicrobiales</taxon>
        <taxon>Rhizobiaceae</taxon>
        <taxon>Rhizobium/Agrobacterium group</taxon>
        <taxon>Allorhizobium</taxon>
        <taxon>Allorhizobium ampelinum</taxon>
    </lineage>
</organism>
<feature type="chain" id="PRO_1000192702" description="Probable cytosol aminopeptidase">
    <location>
        <begin position="1"/>
        <end position="497"/>
    </location>
</feature>
<feature type="active site" evidence="1">
    <location>
        <position position="275"/>
    </location>
</feature>
<feature type="active site" evidence="1">
    <location>
        <position position="349"/>
    </location>
</feature>
<feature type="binding site" evidence="1">
    <location>
        <position position="263"/>
    </location>
    <ligand>
        <name>Mn(2+)</name>
        <dbReference type="ChEBI" id="CHEBI:29035"/>
        <label>2</label>
    </ligand>
</feature>
<feature type="binding site" evidence="1">
    <location>
        <position position="268"/>
    </location>
    <ligand>
        <name>Mn(2+)</name>
        <dbReference type="ChEBI" id="CHEBI:29035"/>
        <label>1</label>
    </ligand>
</feature>
<feature type="binding site" evidence="1">
    <location>
        <position position="268"/>
    </location>
    <ligand>
        <name>Mn(2+)</name>
        <dbReference type="ChEBI" id="CHEBI:29035"/>
        <label>2</label>
    </ligand>
</feature>
<feature type="binding site" evidence="1">
    <location>
        <position position="286"/>
    </location>
    <ligand>
        <name>Mn(2+)</name>
        <dbReference type="ChEBI" id="CHEBI:29035"/>
        <label>2</label>
    </ligand>
</feature>
<feature type="binding site" evidence="1">
    <location>
        <position position="345"/>
    </location>
    <ligand>
        <name>Mn(2+)</name>
        <dbReference type="ChEBI" id="CHEBI:29035"/>
        <label>1</label>
    </ligand>
</feature>
<feature type="binding site" evidence="1">
    <location>
        <position position="347"/>
    </location>
    <ligand>
        <name>Mn(2+)</name>
        <dbReference type="ChEBI" id="CHEBI:29035"/>
        <label>1</label>
    </ligand>
</feature>
<feature type="binding site" evidence="1">
    <location>
        <position position="347"/>
    </location>
    <ligand>
        <name>Mn(2+)</name>
        <dbReference type="ChEBI" id="CHEBI:29035"/>
        <label>2</label>
    </ligand>
</feature>
<keyword id="KW-0031">Aminopeptidase</keyword>
<keyword id="KW-0963">Cytoplasm</keyword>
<keyword id="KW-0378">Hydrolase</keyword>
<keyword id="KW-0464">Manganese</keyword>
<keyword id="KW-0479">Metal-binding</keyword>
<keyword id="KW-0645">Protease</keyword>
<keyword id="KW-1185">Reference proteome</keyword>
<evidence type="ECO:0000255" key="1">
    <source>
        <dbReference type="HAMAP-Rule" id="MF_00181"/>
    </source>
</evidence>
<proteinExistence type="inferred from homology"/>
<protein>
    <recommendedName>
        <fullName evidence="1">Probable cytosol aminopeptidase</fullName>
        <ecNumber evidence="1">3.4.11.1</ecNumber>
    </recommendedName>
    <alternativeName>
        <fullName evidence="1">Leucine aminopeptidase</fullName>
        <shortName evidence="1">LAP</shortName>
        <ecNumber evidence="1">3.4.11.10</ecNumber>
    </alternativeName>
    <alternativeName>
        <fullName evidence="1">Leucyl aminopeptidase</fullName>
    </alternativeName>
</protein>
<name>AMPA_ALLAM</name>
<accession>B9JUW1</accession>
<dbReference type="EC" id="3.4.11.1" evidence="1"/>
<dbReference type="EC" id="3.4.11.10" evidence="1"/>
<dbReference type="EMBL" id="CP000633">
    <property type="protein sequence ID" value="ACM36106.1"/>
    <property type="molecule type" value="Genomic_DNA"/>
</dbReference>
<dbReference type="RefSeq" id="WP_015915530.1">
    <property type="nucleotide sequence ID" value="NC_011989.1"/>
</dbReference>
<dbReference type="SMR" id="B9JUW1"/>
<dbReference type="STRING" id="311402.Avi_1545"/>
<dbReference type="KEGG" id="avi:Avi_1545"/>
<dbReference type="eggNOG" id="COG0260">
    <property type="taxonomic scope" value="Bacteria"/>
</dbReference>
<dbReference type="HOGENOM" id="CLU_013734_6_0_5"/>
<dbReference type="Proteomes" id="UP000001596">
    <property type="component" value="Chromosome 1"/>
</dbReference>
<dbReference type="GO" id="GO:0005737">
    <property type="term" value="C:cytoplasm"/>
    <property type="evidence" value="ECO:0007669"/>
    <property type="project" value="UniProtKB-SubCell"/>
</dbReference>
<dbReference type="GO" id="GO:0030145">
    <property type="term" value="F:manganese ion binding"/>
    <property type="evidence" value="ECO:0007669"/>
    <property type="project" value="UniProtKB-UniRule"/>
</dbReference>
<dbReference type="GO" id="GO:0070006">
    <property type="term" value="F:metalloaminopeptidase activity"/>
    <property type="evidence" value="ECO:0007669"/>
    <property type="project" value="InterPro"/>
</dbReference>
<dbReference type="GO" id="GO:0006508">
    <property type="term" value="P:proteolysis"/>
    <property type="evidence" value="ECO:0007669"/>
    <property type="project" value="UniProtKB-KW"/>
</dbReference>
<dbReference type="CDD" id="cd00433">
    <property type="entry name" value="Peptidase_M17"/>
    <property type="match status" value="1"/>
</dbReference>
<dbReference type="Gene3D" id="3.40.220.10">
    <property type="entry name" value="Leucine Aminopeptidase, subunit E, domain 1"/>
    <property type="match status" value="1"/>
</dbReference>
<dbReference type="Gene3D" id="3.40.630.10">
    <property type="entry name" value="Zn peptidases"/>
    <property type="match status" value="1"/>
</dbReference>
<dbReference type="HAMAP" id="MF_00181">
    <property type="entry name" value="Cytosol_peptidase_M17"/>
    <property type="match status" value="1"/>
</dbReference>
<dbReference type="InterPro" id="IPR011356">
    <property type="entry name" value="Leucine_aapep/pepB"/>
</dbReference>
<dbReference type="InterPro" id="IPR043472">
    <property type="entry name" value="Macro_dom-like"/>
</dbReference>
<dbReference type="InterPro" id="IPR000819">
    <property type="entry name" value="Peptidase_M17_C"/>
</dbReference>
<dbReference type="InterPro" id="IPR023042">
    <property type="entry name" value="Peptidase_M17_leu_NH2_pept"/>
</dbReference>
<dbReference type="InterPro" id="IPR008283">
    <property type="entry name" value="Peptidase_M17_N"/>
</dbReference>
<dbReference type="NCBIfam" id="NF002074">
    <property type="entry name" value="PRK00913.1-4"/>
    <property type="match status" value="1"/>
</dbReference>
<dbReference type="NCBIfam" id="NF002075">
    <property type="entry name" value="PRK00913.2-2"/>
    <property type="match status" value="1"/>
</dbReference>
<dbReference type="NCBIfam" id="NF002077">
    <property type="entry name" value="PRK00913.2-4"/>
    <property type="match status" value="1"/>
</dbReference>
<dbReference type="PANTHER" id="PTHR11963:SF23">
    <property type="entry name" value="CYTOSOL AMINOPEPTIDASE"/>
    <property type="match status" value="1"/>
</dbReference>
<dbReference type="PANTHER" id="PTHR11963">
    <property type="entry name" value="LEUCINE AMINOPEPTIDASE-RELATED"/>
    <property type="match status" value="1"/>
</dbReference>
<dbReference type="Pfam" id="PF00883">
    <property type="entry name" value="Peptidase_M17"/>
    <property type="match status" value="1"/>
</dbReference>
<dbReference type="Pfam" id="PF02789">
    <property type="entry name" value="Peptidase_M17_N"/>
    <property type="match status" value="1"/>
</dbReference>
<dbReference type="PRINTS" id="PR00481">
    <property type="entry name" value="LAMNOPPTDASE"/>
</dbReference>
<dbReference type="SUPFAM" id="SSF52949">
    <property type="entry name" value="Macro domain-like"/>
    <property type="match status" value="1"/>
</dbReference>
<dbReference type="SUPFAM" id="SSF53187">
    <property type="entry name" value="Zn-dependent exopeptidases"/>
    <property type="match status" value="1"/>
</dbReference>
<dbReference type="PROSITE" id="PS00631">
    <property type="entry name" value="CYTOSOL_AP"/>
    <property type="match status" value="1"/>
</dbReference>
<comment type="function">
    <text evidence="1">Presumably involved in the processing and regular turnover of intracellular proteins. Catalyzes the removal of unsubstituted N-terminal amino acids from various peptides.</text>
</comment>
<comment type="catalytic activity">
    <reaction evidence="1">
        <text>Release of an N-terminal amino acid, Xaa-|-Yaa-, in which Xaa is preferably Leu, but may be other amino acids including Pro although not Arg or Lys, and Yaa may be Pro. Amino acid amides and methyl esters are also readily hydrolyzed, but rates on arylamides are exceedingly low.</text>
        <dbReference type="EC" id="3.4.11.1"/>
    </reaction>
</comment>
<comment type="catalytic activity">
    <reaction evidence="1">
        <text>Release of an N-terminal amino acid, preferentially leucine, but not glutamic or aspartic acids.</text>
        <dbReference type="EC" id="3.4.11.10"/>
    </reaction>
</comment>
<comment type="cofactor">
    <cofactor evidence="1">
        <name>Mn(2+)</name>
        <dbReference type="ChEBI" id="CHEBI:29035"/>
    </cofactor>
    <text evidence="1">Binds 2 manganese ions per subunit.</text>
</comment>
<comment type="subcellular location">
    <subcellularLocation>
        <location evidence="1">Cytoplasm</location>
    </subcellularLocation>
</comment>
<comment type="similarity">
    <text evidence="1">Belongs to the peptidase M17 family.</text>
</comment>
<sequence length="497" mass="52043">MSMKLEISFAPSALIEAGLVLSLKEAEATLPAGAATVDPSGIFAKAAATAKFKAKAMSVLDILAPTGSQADRLIVIGAGKAADLVDHDWLRLGGVAAANLKGSEAVTVFLDADGLTITAEGVRDFAIGMLLRAYSFDDYKTKKKDDDDKAPSAVQITLVTAVADAAERLFAAEGRAVVDGVLLARNLVNLPANVLGPVEFADRAKALEALGVEVEILTETEMASLGMGALLGVAQGSVRPPRLAVMQWKGGAPEGQPIAFIGKGVVFDTGGISIKPAGGMEDMKGDMGGAAAVIGLMHTLAARKAKVNAIGILGLVENMPDGNAQRPGDIVTSMSGQTIEVINTDAEGRLVLCDALWYCNDRFKPAFMINLATLTGAILVALANLHAGLFSNDDTLAENLLKAGLSTNERLWRMPLGKDYDKLIDSKFADMKNTGGRYGGSITAAQFLKRFVGDTPWAHLDIAGTAMASPKDEINQSWASGFGVRLLDQLVRDAYEA</sequence>
<reference key="1">
    <citation type="journal article" date="2009" name="J. Bacteriol.">
        <title>Genome sequences of three Agrobacterium biovars help elucidate the evolution of multichromosome genomes in bacteria.</title>
        <authorList>
            <person name="Slater S.C."/>
            <person name="Goldman B.S."/>
            <person name="Goodner B."/>
            <person name="Setubal J.C."/>
            <person name="Farrand S.K."/>
            <person name="Nester E.W."/>
            <person name="Burr T.J."/>
            <person name="Banta L."/>
            <person name="Dickerman A.W."/>
            <person name="Paulsen I."/>
            <person name="Otten L."/>
            <person name="Suen G."/>
            <person name="Welch R."/>
            <person name="Almeida N.F."/>
            <person name="Arnold F."/>
            <person name="Burton O.T."/>
            <person name="Du Z."/>
            <person name="Ewing A."/>
            <person name="Godsy E."/>
            <person name="Heisel S."/>
            <person name="Houmiel K.L."/>
            <person name="Jhaveri J."/>
            <person name="Lu J."/>
            <person name="Miller N.M."/>
            <person name="Norton S."/>
            <person name="Chen Q."/>
            <person name="Phoolcharoen W."/>
            <person name="Ohlin V."/>
            <person name="Ondrusek D."/>
            <person name="Pride N."/>
            <person name="Stricklin S.L."/>
            <person name="Sun J."/>
            <person name="Wheeler C."/>
            <person name="Wilson L."/>
            <person name="Zhu H."/>
            <person name="Wood D.W."/>
        </authorList>
    </citation>
    <scope>NUCLEOTIDE SEQUENCE [LARGE SCALE GENOMIC DNA]</scope>
    <source>
        <strain>ATCC BAA-846 / DSM 112012 / S4</strain>
    </source>
</reference>
<gene>
    <name evidence="1" type="primary">pepA</name>
    <name type="ordered locus">Avi_1545</name>
</gene>